<feature type="chain" id="PRO_0000202507" description="Altered inheritance of mitochondria protein 4">
    <location>
        <begin position="1"/>
        <end position="123"/>
    </location>
</feature>
<feature type="region of interest" description="Disordered" evidence="1">
    <location>
        <begin position="1"/>
        <end position="42"/>
    </location>
</feature>
<feature type="compositionally biased region" description="Basic and acidic residues" evidence="1">
    <location>
        <begin position="1"/>
        <end position="16"/>
    </location>
</feature>
<feature type="compositionally biased region" description="Basic residues" evidence="1">
    <location>
        <begin position="17"/>
        <end position="28"/>
    </location>
</feature>
<proteinExistence type="evidence at protein level"/>
<dbReference type="EMBL" id="Z21487">
    <property type="protein sequence ID" value="CAA79681.1"/>
    <property type="molecule type" value="Genomic_DNA"/>
</dbReference>
<dbReference type="EMBL" id="Z36063">
    <property type="protein sequence ID" value="CAA85156.1"/>
    <property type="molecule type" value="Genomic_DNA"/>
</dbReference>
<dbReference type="EMBL" id="AY692669">
    <property type="protein sequence ID" value="AAT92688.1"/>
    <property type="molecule type" value="Genomic_DNA"/>
</dbReference>
<dbReference type="EMBL" id="BK006936">
    <property type="protein sequence ID" value="DAA07308.1"/>
    <property type="molecule type" value="Genomic_DNA"/>
</dbReference>
<dbReference type="PIR" id="S34019">
    <property type="entry name" value="S34019"/>
</dbReference>
<dbReference type="RefSeq" id="NP_009753.3">
    <property type="nucleotide sequence ID" value="NM_001178542.3"/>
</dbReference>
<dbReference type="BioGRID" id="32891">
    <property type="interactions" value="557"/>
</dbReference>
<dbReference type="DIP" id="DIP-2018N"/>
<dbReference type="FunCoup" id="P38305">
    <property type="interactions" value="169"/>
</dbReference>
<dbReference type="IntAct" id="P38305">
    <property type="interactions" value="69"/>
</dbReference>
<dbReference type="MINT" id="P38305"/>
<dbReference type="STRING" id="4932.YBR194W"/>
<dbReference type="PaxDb" id="4932-YBR194W"/>
<dbReference type="PeptideAtlas" id="P38305"/>
<dbReference type="EnsemblFungi" id="YBR194W_mRNA">
    <property type="protein sequence ID" value="YBR194W"/>
    <property type="gene ID" value="YBR194W"/>
</dbReference>
<dbReference type="GeneID" id="852493"/>
<dbReference type="KEGG" id="sce:YBR194W"/>
<dbReference type="AGR" id="SGD:S000000398"/>
<dbReference type="SGD" id="S000000398">
    <property type="gene designation" value="AIM4"/>
</dbReference>
<dbReference type="VEuPathDB" id="FungiDB:YBR194W"/>
<dbReference type="eggNOG" id="ENOG502SDQZ">
    <property type="taxonomic scope" value="Eukaryota"/>
</dbReference>
<dbReference type="HOGENOM" id="CLU_2016514_0_0_1"/>
<dbReference type="InParanoid" id="P38305"/>
<dbReference type="OMA" id="QEDSAYM"/>
<dbReference type="OrthoDB" id="4041945at2759"/>
<dbReference type="BioCyc" id="YEAST:G3O-29136-MONOMER"/>
<dbReference type="BioGRID-ORCS" id="852493">
    <property type="hits" value="0 hits in 10 CRISPR screens"/>
</dbReference>
<dbReference type="PRO" id="PR:P38305"/>
<dbReference type="Proteomes" id="UP000002311">
    <property type="component" value="Chromosome II"/>
</dbReference>
<dbReference type="RNAct" id="P38305">
    <property type="molecule type" value="protein"/>
</dbReference>
<dbReference type="GO" id="GO:0005737">
    <property type="term" value="C:cytoplasm"/>
    <property type="evidence" value="ECO:0000314"/>
    <property type="project" value="SGD"/>
</dbReference>
<dbReference type="Pfam" id="PF12622">
    <property type="entry name" value="NpwBP"/>
    <property type="match status" value="1"/>
</dbReference>
<protein>
    <recommendedName>
        <fullName>Altered inheritance of mitochondria protein 4</fullName>
    </recommendedName>
    <alternativeName>
        <fullName>Synthetic with old yellow enzyme protein 1</fullName>
    </alternativeName>
</protein>
<sequence length="123" mass="14234">MDQKKDPSNNLTERRVSKVQRPNKKKVRNQVESLSRNLERNKEGQLLQTVSKGHLEADSGHSLGREKENGELGIRSIFYDKDWNPRGTAPSHYRNIPYNPATFKRRTEVQARLGNLENIKIPK</sequence>
<accession>P38305</accession>
<accession>D6VQI8</accession>
<comment type="subunit">
    <text>May interact with the nuclear pore complex.</text>
</comment>
<comment type="interaction">
    <interactant intactId="EBI-20939">
        <id>P38305</id>
    </interactant>
    <interactant intactId="EBI-35138">
        <id>Q06525</id>
        <label>URN1</label>
    </interactant>
    <organismsDiffer>false</organismsDiffer>
    <experiments>7</experiments>
</comment>
<comment type="subcellular location">
    <subcellularLocation>
        <location evidence="2">Cytoplasm</location>
    </subcellularLocation>
</comment>
<comment type="disruption phenotype">
    <text evidence="3 4 5">Increases frequency of mitochondrial genome loss and sensitivity to freeze-thaw stress and high concentrations of glucose.</text>
</comment>
<comment type="similarity">
    <text evidence="6">Belongs to the AIM4 family.</text>
</comment>
<organism>
    <name type="scientific">Saccharomyces cerevisiae (strain ATCC 204508 / S288c)</name>
    <name type="common">Baker's yeast</name>
    <dbReference type="NCBI Taxonomy" id="559292"/>
    <lineage>
        <taxon>Eukaryota</taxon>
        <taxon>Fungi</taxon>
        <taxon>Dikarya</taxon>
        <taxon>Ascomycota</taxon>
        <taxon>Saccharomycotina</taxon>
        <taxon>Saccharomycetes</taxon>
        <taxon>Saccharomycetales</taxon>
        <taxon>Saccharomycetaceae</taxon>
        <taxon>Saccharomyces</taxon>
    </lineage>
</organism>
<gene>
    <name type="primary">AIM4</name>
    <name type="synonym">SOY1</name>
    <name type="ordered locus">YBR194W</name>
    <name type="ORF">YBR1404</name>
</gene>
<name>AIM4_YEAST</name>
<keyword id="KW-0963">Cytoplasm</keyword>
<keyword id="KW-1185">Reference proteome</keyword>
<evidence type="ECO:0000256" key="1">
    <source>
        <dbReference type="SAM" id="MobiDB-lite"/>
    </source>
</evidence>
<evidence type="ECO:0000269" key="2">
    <source>
    </source>
</evidence>
<evidence type="ECO:0000269" key="3">
    <source>
    </source>
</evidence>
<evidence type="ECO:0000269" key="4">
    <source>
    </source>
</evidence>
<evidence type="ECO:0000269" key="5">
    <source>
    </source>
</evidence>
<evidence type="ECO:0000305" key="6"/>
<reference key="1">
    <citation type="journal article" date="1993" name="Yeast">
        <title>RIM2, MSI1 and PGI1 are located within an 8 kb segment of Saccharomyces cerevisiae chromosome II, which also contains the putative ribosomal gene L21 and a new putative essential gene with a leucine zipper motif.</title>
        <authorList>
            <person name="Demolis N."/>
            <person name="Mallet L."/>
            <person name="Bussereau F."/>
            <person name="Jacquet M."/>
        </authorList>
    </citation>
    <scope>NUCLEOTIDE SEQUENCE [GENOMIC DNA]</scope>
    <source>
        <strain>ATCC 204508 / S288c</strain>
    </source>
</reference>
<reference key="2">
    <citation type="journal article" date="1994" name="EMBO J.">
        <title>Complete DNA sequence of yeast chromosome II.</title>
        <authorList>
            <person name="Feldmann H."/>
            <person name="Aigle M."/>
            <person name="Aljinovic G."/>
            <person name="Andre B."/>
            <person name="Baclet M.C."/>
            <person name="Barthe C."/>
            <person name="Baur A."/>
            <person name="Becam A.-M."/>
            <person name="Biteau N."/>
            <person name="Boles E."/>
            <person name="Brandt T."/>
            <person name="Brendel M."/>
            <person name="Brueckner M."/>
            <person name="Bussereau F."/>
            <person name="Christiansen C."/>
            <person name="Contreras R."/>
            <person name="Crouzet M."/>
            <person name="Cziepluch C."/>
            <person name="Demolis N."/>
            <person name="Delaveau T."/>
            <person name="Doignon F."/>
            <person name="Domdey H."/>
            <person name="Duesterhus S."/>
            <person name="Dubois E."/>
            <person name="Dujon B."/>
            <person name="El Bakkoury M."/>
            <person name="Entian K.-D."/>
            <person name="Feuermann M."/>
            <person name="Fiers W."/>
            <person name="Fobo G.M."/>
            <person name="Fritz C."/>
            <person name="Gassenhuber J."/>
            <person name="Glansdorff N."/>
            <person name="Goffeau A."/>
            <person name="Grivell L.A."/>
            <person name="de Haan M."/>
            <person name="Hein C."/>
            <person name="Herbert C.J."/>
            <person name="Hollenberg C.P."/>
            <person name="Holmstroem K."/>
            <person name="Jacq C."/>
            <person name="Jacquet M."/>
            <person name="Jauniaux J.-C."/>
            <person name="Jonniaux J.-L."/>
            <person name="Kallesoee T."/>
            <person name="Kiesau P."/>
            <person name="Kirchrath L."/>
            <person name="Koetter P."/>
            <person name="Korol S."/>
            <person name="Liebl S."/>
            <person name="Logghe M."/>
            <person name="Lohan A.J.E."/>
            <person name="Louis E.J."/>
            <person name="Li Z.Y."/>
            <person name="Maat M.J."/>
            <person name="Mallet L."/>
            <person name="Mannhaupt G."/>
            <person name="Messenguy F."/>
            <person name="Miosga T."/>
            <person name="Molemans F."/>
            <person name="Mueller S."/>
            <person name="Nasr F."/>
            <person name="Obermaier B."/>
            <person name="Perea J."/>
            <person name="Pierard A."/>
            <person name="Piravandi E."/>
            <person name="Pohl F.M."/>
            <person name="Pohl T.M."/>
            <person name="Potier S."/>
            <person name="Proft M."/>
            <person name="Purnelle B."/>
            <person name="Ramezani Rad M."/>
            <person name="Rieger M."/>
            <person name="Rose M."/>
            <person name="Schaaff-Gerstenschlaeger I."/>
            <person name="Scherens B."/>
            <person name="Schwarzlose C."/>
            <person name="Skala J."/>
            <person name="Slonimski P.P."/>
            <person name="Smits P.H.M."/>
            <person name="Souciet J.-L."/>
            <person name="Steensma H.Y."/>
            <person name="Stucka R."/>
            <person name="Urrestarazu L.A."/>
            <person name="van der Aart Q.J.M."/>
            <person name="Van Dyck L."/>
            <person name="Vassarotti A."/>
            <person name="Vetter I."/>
            <person name="Vierendeels F."/>
            <person name="Vissers S."/>
            <person name="Wagner G."/>
            <person name="de Wergifosse P."/>
            <person name="Wolfe K.H."/>
            <person name="Zagulski M."/>
            <person name="Zimmermann F.K."/>
            <person name="Mewes H.-W."/>
            <person name="Kleine K."/>
        </authorList>
    </citation>
    <scope>NUCLEOTIDE SEQUENCE [LARGE SCALE GENOMIC DNA]</scope>
    <source>
        <strain>ATCC 204508 / S288c</strain>
    </source>
</reference>
<reference key="3">
    <citation type="journal article" date="2014" name="G3 (Bethesda)">
        <title>The reference genome sequence of Saccharomyces cerevisiae: Then and now.</title>
        <authorList>
            <person name="Engel S.R."/>
            <person name="Dietrich F.S."/>
            <person name="Fisk D.G."/>
            <person name="Binkley G."/>
            <person name="Balakrishnan R."/>
            <person name="Costanzo M.C."/>
            <person name="Dwight S.S."/>
            <person name="Hitz B.C."/>
            <person name="Karra K."/>
            <person name="Nash R.S."/>
            <person name="Weng S."/>
            <person name="Wong E.D."/>
            <person name="Lloyd P."/>
            <person name="Skrzypek M.S."/>
            <person name="Miyasato S.R."/>
            <person name="Simison M."/>
            <person name="Cherry J.M."/>
        </authorList>
    </citation>
    <scope>GENOME REANNOTATION</scope>
    <source>
        <strain>ATCC 204508 / S288c</strain>
    </source>
</reference>
<reference key="4">
    <citation type="journal article" date="2007" name="Genome Res.">
        <title>Approaching a complete repository of sequence-verified protein-encoding clones for Saccharomyces cerevisiae.</title>
        <authorList>
            <person name="Hu Y."/>
            <person name="Rolfs A."/>
            <person name="Bhullar B."/>
            <person name="Murthy T.V.S."/>
            <person name="Zhu C."/>
            <person name="Berger M.F."/>
            <person name="Camargo A.A."/>
            <person name="Kelley F."/>
            <person name="McCarron S."/>
            <person name="Jepson D."/>
            <person name="Richardson A."/>
            <person name="Raphael J."/>
            <person name="Moreira D."/>
            <person name="Taycher E."/>
            <person name="Zuo D."/>
            <person name="Mohr S."/>
            <person name="Kane M.F."/>
            <person name="Williamson J."/>
            <person name="Simpson A.J.G."/>
            <person name="Bulyk M.L."/>
            <person name="Harlow E."/>
            <person name="Marsischky G."/>
            <person name="Kolodner R.D."/>
            <person name="LaBaer J."/>
        </authorList>
    </citation>
    <scope>NUCLEOTIDE SEQUENCE [GENOMIC DNA]</scope>
    <source>
        <strain>ATCC 204508 / S288c</strain>
    </source>
</reference>
<reference key="5">
    <citation type="journal article" date="2000" name="J. Cell Biol.">
        <title>The yeast nuclear pore complex: composition, architecture, and transport mechanism.</title>
        <authorList>
            <person name="Rout M.P."/>
            <person name="Aitchison J.D."/>
            <person name="Suprapto A."/>
            <person name="Hjertaas K."/>
            <person name="Zhao Y."/>
            <person name="Chait B.T."/>
        </authorList>
    </citation>
    <scope>ASSOCIATION WITH THE NUCLEAR PORE COMPLEX</scope>
    <scope>IDENTIFICATION BY MASS SPECTROMETRY</scope>
    <scope>SUBCELLULAR LOCATION</scope>
</reference>
<reference key="6">
    <citation type="journal article" date="2007" name="FEMS Yeast Res.">
        <title>Identification and classification of genes required for tolerance to freeze-thaw stress revealed by genome-wide screening of Saccharomyces cerevisiae deletion strains.</title>
        <authorList>
            <person name="Ando A."/>
            <person name="Nakamura T."/>
            <person name="Murata Y."/>
            <person name="Takagi H."/>
            <person name="Shima J."/>
        </authorList>
    </citation>
    <scope>DISRUPTION PHENOTYPE</scope>
</reference>
<reference key="7">
    <citation type="journal article" date="2009" name="PLoS Genet.">
        <title>Computationally driven, quantitative experiments discover genes required for mitochondrial biogenesis.</title>
        <authorList>
            <person name="Hess D.C."/>
            <person name="Myers C.L."/>
            <person name="Huttenhower C."/>
            <person name="Hibbs M.A."/>
            <person name="Hayes A.P."/>
            <person name="Paw J."/>
            <person name="Clore J.J."/>
            <person name="Mendoza R.M."/>
            <person name="Luis B.S."/>
            <person name="Nislow C."/>
            <person name="Giaever G."/>
            <person name="Costanzo M."/>
            <person name="Troyanskaya O.G."/>
            <person name="Caudy A.A."/>
        </authorList>
    </citation>
    <scope>DISRUPTION PHENOTYPE</scope>
</reference>
<reference key="8">
    <citation type="journal article" date="2010" name="OMICS">
        <title>Identification of genes required for maximal tolerance to high-glucose concentrations, as those present in industrial alcoholic fermentation media, through a chemogenomics approach.</title>
        <authorList>
            <person name="Teixeira M.C."/>
            <person name="Raposo L.R."/>
            <person name="Palma M."/>
            <person name="Sa-Correia I."/>
        </authorList>
    </citation>
    <scope>DISRUPTION PHENOTYPE</scope>
</reference>
<reference key="9">
    <citation type="journal article" date="2012" name="Proc. Natl. Acad. Sci. U.S.A.">
        <title>N-terminal acetylome analyses and functional insights of the N-terminal acetyltransferase NatB.</title>
        <authorList>
            <person name="Van Damme P."/>
            <person name="Lasa M."/>
            <person name="Polevoda B."/>
            <person name="Gazquez C."/>
            <person name="Elosegui-Artola A."/>
            <person name="Kim D.S."/>
            <person name="De Juan-Pardo E."/>
            <person name="Demeyer K."/>
            <person name="Hole K."/>
            <person name="Larrea E."/>
            <person name="Timmerman E."/>
            <person name="Prieto J."/>
            <person name="Arnesen T."/>
            <person name="Sherman F."/>
            <person name="Gevaert K."/>
            <person name="Aldabe R."/>
        </authorList>
    </citation>
    <scope>IDENTIFICATION BY MASS SPECTROMETRY [LARGE SCALE ANALYSIS]</scope>
</reference>